<feature type="chain" id="PRO_0000293909" description="Small ribosomal subunit protein uS3">
    <location>
        <begin position="1"/>
        <end position="208"/>
    </location>
</feature>
<feature type="domain" description="KH type-2" evidence="1">
    <location>
        <begin position="38"/>
        <end position="106"/>
    </location>
</feature>
<organism>
    <name type="scientific">Syntrophobacter fumaroxidans (strain DSM 10017 / MPOB)</name>
    <dbReference type="NCBI Taxonomy" id="335543"/>
    <lineage>
        <taxon>Bacteria</taxon>
        <taxon>Pseudomonadati</taxon>
        <taxon>Thermodesulfobacteriota</taxon>
        <taxon>Syntrophobacteria</taxon>
        <taxon>Syntrophobacterales</taxon>
        <taxon>Syntrophobacteraceae</taxon>
        <taxon>Syntrophobacter</taxon>
    </lineage>
</organism>
<dbReference type="EMBL" id="CP000478">
    <property type="protein sequence ID" value="ABK17248.1"/>
    <property type="status" value="ALT_INIT"/>
    <property type="molecule type" value="Genomic_DNA"/>
</dbReference>
<dbReference type="RefSeq" id="WP_041442082.1">
    <property type="nucleotide sequence ID" value="NC_008554.1"/>
</dbReference>
<dbReference type="SMR" id="A0LIJ6"/>
<dbReference type="FunCoup" id="A0LIJ6">
    <property type="interactions" value="726"/>
</dbReference>
<dbReference type="STRING" id="335543.Sfum_1561"/>
<dbReference type="KEGG" id="sfu:Sfum_1561"/>
<dbReference type="eggNOG" id="COG0092">
    <property type="taxonomic scope" value="Bacteria"/>
</dbReference>
<dbReference type="HOGENOM" id="CLU_058591_0_2_7"/>
<dbReference type="InParanoid" id="A0LIJ6"/>
<dbReference type="OrthoDB" id="9806396at2"/>
<dbReference type="Proteomes" id="UP000001784">
    <property type="component" value="Chromosome"/>
</dbReference>
<dbReference type="GO" id="GO:0022627">
    <property type="term" value="C:cytosolic small ribosomal subunit"/>
    <property type="evidence" value="ECO:0007669"/>
    <property type="project" value="TreeGrafter"/>
</dbReference>
<dbReference type="GO" id="GO:0003729">
    <property type="term" value="F:mRNA binding"/>
    <property type="evidence" value="ECO:0007669"/>
    <property type="project" value="UniProtKB-UniRule"/>
</dbReference>
<dbReference type="GO" id="GO:0019843">
    <property type="term" value="F:rRNA binding"/>
    <property type="evidence" value="ECO:0007669"/>
    <property type="project" value="UniProtKB-UniRule"/>
</dbReference>
<dbReference type="GO" id="GO:0003735">
    <property type="term" value="F:structural constituent of ribosome"/>
    <property type="evidence" value="ECO:0007669"/>
    <property type="project" value="InterPro"/>
</dbReference>
<dbReference type="GO" id="GO:0006412">
    <property type="term" value="P:translation"/>
    <property type="evidence" value="ECO:0007669"/>
    <property type="project" value="UniProtKB-UniRule"/>
</dbReference>
<dbReference type="CDD" id="cd02412">
    <property type="entry name" value="KH-II_30S_S3"/>
    <property type="match status" value="1"/>
</dbReference>
<dbReference type="FunFam" id="3.30.300.20:FF:000001">
    <property type="entry name" value="30S ribosomal protein S3"/>
    <property type="match status" value="1"/>
</dbReference>
<dbReference type="Gene3D" id="3.30.300.20">
    <property type="match status" value="1"/>
</dbReference>
<dbReference type="Gene3D" id="3.30.1140.32">
    <property type="entry name" value="Ribosomal protein S3, C-terminal domain"/>
    <property type="match status" value="1"/>
</dbReference>
<dbReference type="HAMAP" id="MF_01309_B">
    <property type="entry name" value="Ribosomal_uS3_B"/>
    <property type="match status" value="1"/>
</dbReference>
<dbReference type="InterPro" id="IPR004087">
    <property type="entry name" value="KH_dom"/>
</dbReference>
<dbReference type="InterPro" id="IPR015946">
    <property type="entry name" value="KH_dom-like_a/b"/>
</dbReference>
<dbReference type="InterPro" id="IPR004044">
    <property type="entry name" value="KH_dom_type_2"/>
</dbReference>
<dbReference type="InterPro" id="IPR009019">
    <property type="entry name" value="KH_sf_prok-type"/>
</dbReference>
<dbReference type="InterPro" id="IPR036419">
    <property type="entry name" value="Ribosomal_S3_C_sf"/>
</dbReference>
<dbReference type="InterPro" id="IPR005704">
    <property type="entry name" value="Ribosomal_uS3_bac-typ"/>
</dbReference>
<dbReference type="InterPro" id="IPR001351">
    <property type="entry name" value="Ribosomal_uS3_C"/>
</dbReference>
<dbReference type="InterPro" id="IPR018280">
    <property type="entry name" value="Ribosomal_uS3_CS"/>
</dbReference>
<dbReference type="NCBIfam" id="TIGR01009">
    <property type="entry name" value="rpsC_bact"/>
    <property type="match status" value="1"/>
</dbReference>
<dbReference type="PANTHER" id="PTHR11760">
    <property type="entry name" value="30S/40S RIBOSOMAL PROTEIN S3"/>
    <property type="match status" value="1"/>
</dbReference>
<dbReference type="PANTHER" id="PTHR11760:SF19">
    <property type="entry name" value="SMALL RIBOSOMAL SUBUNIT PROTEIN US3C"/>
    <property type="match status" value="1"/>
</dbReference>
<dbReference type="Pfam" id="PF07650">
    <property type="entry name" value="KH_2"/>
    <property type="match status" value="1"/>
</dbReference>
<dbReference type="Pfam" id="PF00189">
    <property type="entry name" value="Ribosomal_S3_C"/>
    <property type="match status" value="1"/>
</dbReference>
<dbReference type="SMART" id="SM00322">
    <property type="entry name" value="KH"/>
    <property type="match status" value="1"/>
</dbReference>
<dbReference type="SUPFAM" id="SSF54814">
    <property type="entry name" value="Prokaryotic type KH domain (KH-domain type II)"/>
    <property type="match status" value="1"/>
</dbReference>
<dbReference type="SUPFAM" id="SSF54821">
    <property type="entry name" value="Ribosomal protein S3 C-terminal domain"/>
    <property type="match status" value="1"/>
</dbReference>
<dbReference type="PROSITE" id="PS50823">
    <property type="entry name" value="KH_TYPE_2"/>
    <property type="match status" value="1"/>
</dbReference>
<dbReference type="PROSITE" id="PS00548">
    <property type="entry name" value="RIBOSOMAL_S3"/>
    <property type="match status" value="1"/>
</dbReference>
<sequence length="208" mass="23692">MGQKVHPTGFRLGILKSWDSRWFATKDYAKLVHEDRKIRDYIKARLYHAGIAKVEIERAANKVKIRIFTARPGIVIGKKGAEIETLRRDLERKFKREILIDIQEVRRPELDATLVGENISLQLVRRVAFRRAMKRAVSAALKFGAKGVRVASAGRLGGAEMARREWYREGRVPLHTLRADIDYGTAIARTTYGAIGVKVWIFKGEVLP</sequence>
<protein>
    <recommendedName>
        <fullName evidence="1">Small ribosomal subunit protein uS3</fullName>
    </recommendedName>
    <alternativeName>
        <fullName evidence="2">30S ribosomal protein S3</fullName>
    </alternativeName>
</protein>
<accession>A0LIJ6</accession>
<keyword id="KW-1185">Reference proteome</keyword>
<keyword id="KW-0687">Ribonucleoprotein</keyword>
<keyword id="KW-0689">Ribosomal protein</keyword>
<keyword id="KW-0694">RNA-binding</keyword>
<keyword id="KW-0699">rRNA-binding</keyword>
<gene>
    <name evidence="1" type="primary">rpsC</name>
    <name type="ordered locus">Sfum_1561</name>
</gene>
<name>RS3_SYNFM</name>
<proteinExistence type="inferred from homology"/>
<reference key="1">
    <citation type="submission" date="2006-10" db="EMBL/GenBank/DDBJ databases">
        <title>Complete sequence of Syntrophobacter fumaroxidans MPOB.</title>
        <authorList>
            <consortium name="US DOE Joint Genome Institute"/>
            <person name="Copeland A."/>
            <person name="Lucas S."/>
            <person name="Lapidus A."/>
            <person name="Barry K."/>
            <person name="Detter J.C."/>
            <person name="Glavina del Rio T."/>
            <person name="Hammon N."/>
            <person name="Israni S."/>
            <person name="Pitluck S."/>
            <person name="Goltsman E.G."/>
            <person name="Martinez M."/>
            <person name="Schmutz J."/>
            <person name="Larimer F."/>
            <person name="Land M."/>
            <person name="Hauser L."/>
            <person name="Kyrpides N."/>
            <person name="Kim E."/>
            <person name="Boone D.R."/>
            <person name="Brockman F."/>
            <person name="Culley D."/>
            <person name="Ferry J."/>
            <person name="Gunsalus R."/>
            <person name="McInerney M.J."/>
            <person name="Morrison M."/>
            <person name="Plugge C."/>
            <person name="Rohlin L."/>
            <person name="Scholten J."/>
            <person name="Sieber J."/>
            <person name="Stams A.J.M."/>
            <person name="Worm P."/>
            <person name="Henstra A.M."/>
            <person name="Richardson P."/>
        </authorList>
    </citation>
    <scope>NUCLEOTIDE SEQUENCE [LARGE SCALE GENOMIC DNA]</scope>
    <source>
        <strain>DSM 10017 / MPOB</strain>
    </source>
</reference>
<comment type="function">
    <text evidence="1">Binds the lower part of the 30S subunit head. Binds mRNA in the 70S ribosome, positioning it for translation.</text>
</comment>
<comment type="subunit">
    <text evidence="1">Part of the 30S ribosomal subunit. Forms a tight complex with proteins S10 and S14.</text>
</comment>
<comment type="similarity">
    <text evidence="1">Belongs to the universal ribosomal protein uS3 family.</text>
</comment>
<comment type="sequence caution" evidence="2">
    <conflict type="erroneous initiation">
        <sequence resource="EMBL-CDS" id="ABK17248"/>
    </conflict>
</comment>
<evidence type="ECO:0000255" key="1">
    <source>
        <dbReference type="HAMAP-Rule" id="MF_01309"/>
    </source>
</evidence>
<evidence type="ECO:0000305" key="2"/>